<organism>
    <name type="scientific">Caenorhabditis elegans</name>
    <dbReference type="NCBI Taxonomy" id="6239"/>
    <lineage>
        <taxon>Eukaryota</taxon>
        <taxon>Metazoa</taxon>
        <taxon>Ecdysozoa</taxon>
        <taxon>Nematoda</taxon>
        <taxon>Chromadorea</taxon>
        <taxon>Rhabditida</taxon>
        <taxon>Rhabditina</taxon>
        <taxon>Rhabditomorpha</taxon>
        <taxon>Rhabditoidea</taxon>
        <taxon>Rhabditidae</taxon>
        <taxon>Peloderinae</taxon>
        <taxon>Caenorhabditis</taxon>
    </lineage>
</organism>
<proteinExistence type="inferred from homology"/>
<dbReference type="EMBL" id="Z22181">
    <property type="protein sequence ID" value="CAA80190.1"/>
    <property type="molecule type" value="Genomic_DNA"/>
</dbReference>
<dbReference type="PIR" id="B88567">
    <property type="entry name" value="B88567"/>
</dbReference>
<dbReference type="PIR" id="S40942">
    <property type="entry name" value="S40942"/>
</dbReference>
<dbReference type="RefSeq" id="NP_499181.1">
    <property type="nucleotide sequence ID" value="NM_066780.7"/>
</dbReference>
<dbReference type="BioGRID" id="41589">
    <property type="interactions" value="2"/>
</dbReference>
<dbReference type="DIP" id="DIP-25529N"/>
<dbReference type="FunCoup" id="P34655">
    <property type="interactions" value="7"/>
</dbReference>
<dbReference type="PaxDb" id="6239-ZK632.10"/>
<dbReference type="PeptideAtlas" id="P34655"/>
<dbReference type="EnsemblMetazoa" id="ZK632.10.1">
    <property type="protein sequence ID" value="ZK632.10.1"/>
    <property type="gene ID" value="WBGene00014017"/>
</dbReference>
<dbReference type="EnsemblMetazoa" id="ZK632.10.2">
    <property type="protein sequence ID" value="ZK632.10.2"/>
    <property type="gene ID" value="WBGene00014017"/>
</dbReference>
<dbReference type="GeneID" id="176395"/>
<dbReference type="KEGG" id="cel:CELE_ZK632.10"/>
<dbReference type="UCSC" id="ZK632.10.1">
    <property type="organism name" value="c. elegans"/>
</dbReference>
<dbReference type="AGR" id="WB:WBGene00014017"/>
<dbReference type="CTD" id="176395"/>
<dbReference type="WormBase" id="ZK632.10">
    <property type="protein sequence ID" value="CE02385"/>
    <property type="gene ID" value="WBGene00014017"/>
</dbReference>
<dbReference type="eggNOG" id="KOG1773">
    <property type="taxonomic scope" value="Eukaryota"/>
</dbReference>
<dbReference type="HOGENOM" id="CLU_107649_4_1_1"/>
<dbReference type="InParanoid" id="P34655"/>
<dbReference type="OMA" id="MCQVLLA"/>
<dbReference type="OrthoDB" id="5912871at2759"/>
<dbReference type="PhylomeDB" id="P34655"/>
<dbReference type="PRO" id="PR:P34655"/>
<dbReference type="Proteomes" id="UP000001940">
    <property type="component" value="Chromosome III"/>
</dbReference>
<dbReference type="Bgee" id="WBGene00014017">
    <property type="expression patterns" value="Expressed in embryo and 4 other cell types or tissues"/>
</dbReference>
<dbReference type="GO" id="GO:0016020">
    <property type="term" value="C:membrane"/>
    <property type="evidence" value="ECO:0007669"/>
    <property type="project" value="UniProtKB-SubCell"/>
</dbReference>
<dbReference type="InterPro" id="IPR000612">
    <property type="entry name" value="PMP3"/>
</dbReference>
<dbReference type="PANTHER" id="PTHR21659">
    <property type="entry name" value="HYDROPHOBIC PROTEIN RCI2 LOW TEMPERATURE AND SALT RESPONSIVE PROTEIN LTI6 -RELATED"/>
    <property type="match status" value="1"/>
</dbReference>
<dbReference type="PANTHER" id="PTHR21659:SF42">
    <property type="entry name" value="UPF0057 MEMBRANE PROTEIN ZK632.10-RELATED"/>
    <property type="match status" value="1"/>
</dbReference>
<dbReference type="Pfam" id="PF01679">
    <property type="entry name" value="Pmp3"/>
    <property type="match status" value="1"/>
</dbReference>
<dbReference type="PROSITE" id="PS01309">
    <property type="entry name" value="UPF0057"/>
    <property type="match status" value="1"/>
</dbReference>
<protein>
    <recommendedName>
        <fullName>UPF0057 membrane protein ZK632.10</fullName>
    </recommendedName>
</protein>
<gene>
    <name type="ORF">ZK632.10</name>
</gene>
<accession>P34655</accession>
<evidence type="ECO:0000255" key="1"/>
<evidence type="ECO:0000305" key="2"/>
<sequence>MCQILLAILAIFLPPIAVLLDVGCNCDLLINILLTCLGIIPGIIHAWYIILCKEKTVVQNIYVQTNDHGTAPPAYSPYSA</sequence>
<name>YOT0_CAEEL</name>
<reference key="1">
    <citation type="journal article" date="1994" name="Nature">
        <title>2.2 Mb of contiguous nucleotide sequence from chromosome III of C. elegans.</title>
        <authorList>
            <person name="Wilson R."/>
            <person name="Ainscough R."/>
            <person name="Anderson K."/>
            <person name="Baynes C."/>
            <person name="Berks M."/>
            <person name="Bonfield J."/>
            <person name="Burton J."/>
            <person name="Connell M."/>
            <person name="Copsey T."/>
            <person name="Cooper J."/>
            <person name="Coulson A."/>
            <person name="Craxton M."/>
            <person name="Dear S."/>
            <person name="Du Z."/>
            <person name="Durbin R."/>
            <person name="Favello A."/>
            <person name="Fraser A."/>
            <person name="Fulton L."/>
            <person name="Gardner A."/>
            <person name="Green P."/>
            <person name="Hawkins T."/>
            <person name="Hillier L."/>
            <person name="Jier M."/>
            <person name="Johnston L."/>
            <person name="Jones M."/>
            <person name="Kershaw J."/>
            <person name="Kirsten J."/>
            <person name="Laisster N."/>
            <person name="Latreille P."/>
            <person name="Lightning J."/>
            <person name="Lloyd C."/>
            <person name="Mortimore B."/>
            <person name="O'Callaghan M."/>
            <person name="Parsons J."/>
            <person name="Percy C."/>
            <person name="Rifken L."/>
            <person name="Roopra A."/>
            <person name="Saunders D."/>
            <person name="Shownkeen R."/>
            <person name="Sims M."/>
            <person name="Smaldon N."/>
            <person name="Smith A."/>
            <person name="Smith M."/>
            <person name="Sonnhammer E."/>
            <person name="Staden R."/>
            <person name="Sulston J."/>
            <person name="Thierry-Mieg J."/>
            <person name="Thomas K."/>
            <person name="Vaudin M."/>
            <person name="Vaughan K."/>
            <person name="Waterston R."/>
            <person name="Watson A."/>
            <person name="Weinstock L."/>
            <person name="Wilkinson-Sproat J."/>
            <person name="Wohldman P."/>
        </authorList>
    </citation>
    <scope>NUCLEOTIDE SEQUENCE [LARGE SCALE GENOMIC DNA]</scope>
    <source>
        <strain>Bristol N2</strain>
    </source>
</reference>
<reference key="2">
    <citation type="journal article" date="1998" name="Science">
        <title>Genome sequence of the nematode C. elegans: a platform for investigating biology.</title>
        <authorList>
            <consortium name="The C. elegans sequencing consortium"/>
        </authorList>
    </citation>
    <scope>NUCLEOTIDE SEQUENCE [LARGE SCALE GENOMIC DNA]</scope>
    <source>
        <strain>Bristol N2</strain>
    </source>
</reference>
<feature type="chain" id="PRO_0000193996" description="UPF0057 membrane protein ZK632.10">
    <location>
        <begin position="1"/>
        <end position="80"/>
    </location>
</feature>
<feature type="transmembrane region" description="Helical" evidence="1">
    <location>
        <begin position="4"/>
        <end position="24"/>
    </location>
</feature>
<feature type="transmembrane region" description="Helical" evidence="1">
    <location>
        <begin position="32"/>
        <end position="52"/>
    </location>
</feature>
<comment type="subcellular location">
    <subcellularLocation>
        <location evidence="2">Membrane</location>
        <topology evidence="2">Multi-pass membrane protein</topology>
    </subcellularLocation>
</comment>
<comment type="similarity">
    <text evidence="2">Belongs to the UPF0057 (PMP3) family.</text>
</comment>
<keyword id="KW-0472">Membrane</keyword>
<keyword id="KW-1185">Reference proteome</keyword>
<keyword id="KW-0812">Transmembrane</keyword>
<keyword id="KW-1133">Transmembrane helix</keyword>